<accession>Q44022</accession>
<name>LEUD_CUPNE</name>
<dbReference type="EC" id="4.2.1.33"/>
<dbReference type="EMBL" id="L36817">
    <property type="protein sequence ID" value="AAC41428.1"/>
    <property type="molecule type" value="Genomic_DNA"/>
</dbReference>
<dbReference type="PIR" id="I39571">
    <property type="entry name" value="I39571"/>
</dbReference>
<dbReference type="RefSeq" id="WP_010810022.1">
    <property type="nucleotide sequence ID" value="NZ_LVWN01000023.1"/>
</dbReference>
<dbReference type="SMR" id="Q44022"/>
<dbReference type="UniPathway" id="UPA00048">
    <property type="reaction ID" value="UER00071"/>
</dbReference>
<dbReference type="GO" id="GO:0009316">
    <property type="term" value="C:3-isopropylmalate dehydratase complex"/>
    <property type="evidence" value="ECO:0007669"/>
    <property type="project" value="InterPro"/>
</dbReference>
<dbReference type="GO" id="GO:0003861">
    <property type="term" value="F:3-isopropylmalate dehydratase activity"/>
    <property type="evidence" value="ECO:0007669"/>
    <property type="project" value="UniProtKB-UniRule"/>
</dbReference>
<dbReference type="GO" id="GO:0009098">
    <property type="term" value="P:L-leucine biosynthetic process"/>
    <property type="evidence" value="ECO:0007669"/>
    <property type="project" value="UniProtKB-UniRule"/>
</dbReference>
<dbReference type="CDD" id="cd01577">
    <property type="entry name" value="IPMI_Swivel"/>
    <property type="match status" value="1"/>
</dbReference>
<dbReference type="FunFam" id="3.20.19.10:FF:000003">
    <property type="entry name" value="3-isopropylmalate dehydratase small subunit"/>
    <property type="match status" value="1"/>
</dbReference>
<dbReference type="Gene3D" id="3.20.19.10">
    <property type="entry name" value="Aconitase, domain 4"/>
    <property type="match status" value="1"/>
</dbReference>
<dbReference type="HAMAP" id="MF_01031">
    <property type="entry name" value="LeuD_type1"/>
    <property type="match status" value="1"/>
</dbReference>
<dbReference type="InterPro" id="IPR004431">
    <property type="entry name" value="3-IsopropMal_deHydase_ssu"/>
</dbReference>
<dbReference type="InterPro" id="IPR015928">
    <property type="entry name" value="Aconitase/3IPM_dehydase_swvl"/>
</dbReference>
<dbReference type="InterPro" id="IPR000573">
    <property type="entry name" value="AconitaseA/IPMdHydase_ssu_swvl"/>
</dbReference>
<dbReference type="InterPro" id="IPR033940">
    <property type="entry name" value="IPMI_Swivel"/>
</dbReference>
<dbReference type="InterPro" id="IPR050075">
    <property type="entry name" value="LeuD"/>
</dbReference>
<dbReference type="NCBIfam" id="TIGR00171">
    <property type="entry name" value="leuD"/>
    <property type="match status" value="1"/>
</dbReference>
<dbReference type="NCBIfam" id="NF002458">
    <property type="entry name" value="PRK01641.1"/>
    <property type="match status" value="1"/>
</dbReference>
<dbReference type="PANTHER" id="PTHR43345:SF5">
    <property type="entry name" value="3-ISOPROPYLMALATE DEHYDRATASE SMALL SUBUNIT"/>
    <property type="match status" value="1"/>
</dbReference>
<dbReference type="PANTHER" id="PTHR43345">
    <property type="entry name" value="3-ISOPROPYLMALATE DEHYDRATASE SMALL SUBUNIT 2-RELATED-RELATED"/>
    <property type="match status" value="1"/>
</dbReference>
<dbReference type="Pfam" id="PF00694">
    <property type="entry name" value="Aconitase_C"/>
    <property type="match status" value="1"/>
</dbReference>
<dbReference type="SUPFAM" id="SSF52016">
    <property type="entry name" value="LeuD/IlvD-like"/>
    <property type="match status" value="1"/>
</dbReference>
<organism>
    <name type="scientific">Cupriavidus necator</name>
    <name type="common">Alcaligenes eutrophus</name>
    <name type="synonym">Ralstonia eutropha</name>
    <dbReference type="NCBI Taxonomy" id="106590"/>
    <lineage>
        <taxon>Bacteria</taxon>
        <taxon>Pseudomonadati</taxon>
        <taxon>Pseudomonadota</taxon>
        <taxon>Betaproteobacteria</taxon>
        <taxon>Burkholderiales</taxon>
        <taxon>Burkholderiaceae</taxon>
        <taxon>Cupriavidus</taxon>
    </lineage>
</organism>
<gene>
    <name type="primary">leuD</name>
</gene>
<reference key="1">
    <citation type="journal article" date="1995" name="Eur. J. Biochem.">
        <title>Metabolic pathway for biosynthesis of poly(3-hydroxybutyrate-co-4-hydroxybutyrate) from 4-hydroxybutyrate by Alcaligenes eutrophus.</title>
        <authorList>
            <person name="Valentin H.E."/>
            <person name="Zwingmann G."/>
            <person name="Schoenebaum A."/>
            <person name="Steinbuechel A."/>
        </authorList>
    </citation>
    <scope>NUCLEOTIDE SEQUENCE [GENOMIC DNA]</scope>
    <source>
        <strain>H16 / SK4040</strain>
    </source>
</reference>
<feature type="chain" id="PRO_0000141864" description="3-isopropylmalate dehydratase small subunit">
    <location>
        <begin position="1"/>
        <end position="208"/>
    </location>
</feature>
<comment type="function">
    <text evidence="1">Catalyzes the isomerization between 2-isopropylmalate and 3-isopropylmalate, via the formation of 2-isopropylmaleate.</text>
</comment>
<comment type="catalytic activity">
    <reaction>
        <text>(2R,3S)-3-isopropylmalate = (2S)-2-isopropylmalate</text>
        <dbReference type="Rhea" id="RHEA:32287"/>
        <dbReference type="ChEBI" id="CHEBI:1178"/>
        <dbReference type="ChEBI" id="CHEBI:35121"/>
        <dbReference type="EC" id="4.2.1.33"/>
    </reaction>
</comment>
<comment type="pathway">
    <text>Amino-acid biosynthesis; L-leucine biosynthesis; L-leucine from 3-methyl-2-oxobutanoate: step 2/4.</text>
</comment>
<comment type="subunit">
    <text>Heterodimer of LeuC and LeuD.</text>
</comment>
<comment type="similarity">
    <text evidence="2">Belongs to the LeuD family. LeuD type 1 subfamily.</text>
</comment>
<protein>
    <recommendedName>
        <fullName>3-isopropylmalate dehydratase small subunit</fullName>
        <ecNumber>4.2.1.33</ecNumber>
    </recommendedName>
    <alternativeName>
        <fullName>Alpha-IPM isomerase</fullName>
        <shortName>IPMI</shortName>
    </alternativeName>
    <alternativeName>
        <fullName>Isopropylmalate isomerase</fullName>
    </alternativeName>
</protein>
<proteinExistence type="inferred from homology"/>
<evidence type="ECO:0000250" key="1"/>
<evidence type="ECO:0000305" key="2"/>
<keyword id="KW-0028">Amino-acid biosynthesis</keyword>
<keyword id="KW-0100">Branched-chain amino acid biosynthesis</keyword>
<keyword id="KW-0432">Leucine biosynthesis</keyword>
<keyword id="KW-0456">Lyase</keyword>
<sequence>MEPFTMHRGVAAPLLRINIDTDAIIPSREMKRVSRHGLAEGLFAGWRYLAGTDRSPDPLFVLNQPEYTGASILLAGSNFGCGSSREHAVWALKEFGIRAIVAPGFGAIFHNNCVRNGLLPVVLPMATVQALADDCAAAPATRQVTVDLRQLEVVSPAGARYGFTLGSEQRQMLLEGLDPIALTLKLASSIDAFQGADRLRRPWIHFDG</sequence>